<keyword id="KW-0131">Cell cycle</keyword>
<keyword id="KW-0132">Cell division</keyword>
<keyword id="KW-0143">Chaperone</keyword>
<keyword id="KW-0963">Cytoplasm</keyword>
<keyword id="KW-0413">Isomerase</keyword>
<keyword id="KW-1185">Reference proteome</keyword>
<keyword id="KW-0697">Rotamase</keyword>
<protein>
    <recommendedName>
        <fullName evidence="1">Trigger factor</fullName>
        <shortName evidence="1">TF</shortName>
        <ecNumber evidence="1">5.2.1.8</ecNumber>
    </recommendedName>
    <alternativeName>
        <fullName evidence="1">PPIase</fullName>
    </alternativeName>
</protein>
<sequence>MSTIETTQGLERRVSITIPADEVETAVREQLKGFAKNARVDGFRKGKVPHHIIAQRFGSSARSEALNDLLPRHFFDLAFKEKLNLAGRPTFAVENAESGKDVVFTATFEVYPEVELKGLENIKVEKPVVEITEADVDNMIEVLRKQQATWAESQAAANAEDRVTIDFSGTIDGEEFEGGKASDFVLFMGQGRMIPGFEEGVIGHKAGEQFDIDVTFPADYHAENLKGKAAKFAITLKKVEVMVLPELTEEFVAKFGPNTKTVADLRNEIQKNMRRELKNALTSRVKQQVIDGLLAENAIDVPFAAVDQEIEVLRGQAAQRFGGNTQQAAQLPRELFEEQAKRRVQVGLLFGEIISSNELKADEERVKAMIEDIASAYEQPAEVIEYYNKNNELMNNLRNVVLEEQAVDAVLAKAQVTEKTASFDEIMNPQA</sequence>
<proteinExistence type="inferred from homology"/>
<accession>A6VME0</accession>
<name>TIG_ACTSZ</name>
<comment type="function">
    <text evidence="1">Involved in protein export. Acts as a chaperone by maintaining the newly synthesized protein in an open conformation. Functions as a peptidyl-prolyl cis-trans isomerase.</text>
</comment>
<comment type="catalytic activity">
    <reaction evidence="1">
        <text>[protein]-peptidylproline (omega=180) = [protein]-peptidylproline (omega=0)</text>
        <dbReference type="Rhea" id="RHEA:16237"/>
        <dbReference type="Rhea" id="RHEA-COMP:10747"/>
        <dbReference type="Rhea" id="RHEA-COMP:10748"/>
        <dbReference type="ChEBI" id="CHEBI:83833"/>
        <dbReference type="ChEBI" id="CHEBI:83834"/>
        <dbReference type="EC" id="5.2.1.8"/>
    </reaction>
</comment>
<comment type="subcellular location">
    <subcellularLocation>
        <location>Cytoplasm</location>
    </subcellularLocation>
    <text evidence="1">About half TF is bound to the ribosome near the polypeptide exit tunnel while the other half is free in the cytoplasm.</text>
</comment>
<comment type="domain">
    <text evidence="1">Consists of 3 domains; the N-terminus binds the ribosome, the middle domain has PPIase activity, while the C-terminus has intrinsic chaperone activity on its own.</text>
</comment>
<comment type="similarity">
    <text evidence="1">Belongs to the FKBP-type PPIase family. Tig subfamily.</text>
</comment>
<gene>
    <name evidence="1" type="primary">tig</name>
    <name type="ordered locus">Asuc_0765</name>
</gene>
<organism>
    <name type="scientific">Actinobacillus succinogenes (strain ATCC 55618 / DSM 22257 / CCUG 43843 / 130Z)</name>
    <dbReference type="NCBI Taxonomy" id="339671"/>
    <lineage>
        <taxon>Bacteria</taxon>
        <taxon>Pseudomonadati</taxon>
        <taxon>Pseudomonadota</taxon>
        <taxon>Gammaproteobacteria</taxon>
        <taxon>Pasteurellales</taxon>
        <taxon>Pasteurellaceae</taxon>
        <taxon>Actinobacillus</taxon>
    </lineage>
</organism>
<reference key="1">
    <citation type="journal article" date="2010" name="BMC Genomics">
        <title>A genomic perspective on the potential of Actinobacillus succinogenes for industrial succinate production.</title>
        <authorList>
            <person name="McKinlay J.B."/>
            <person name="Laivenieks M."/>
            <person name="Schindler B.D."/>
            <person name="McKinlay A.A."/>
            <person name="Siddaramappa S."/>
            <person name="Challacombe J.F."/>
            <person name="Lowry S.R."/>
            <person name="Clum A."/>
            <person name="Lapidus A.L."/>
            <person name="Burkhart K.B."/>
            <person name="Harkins V."/>
            <person name="Vieille C."/>
        </authorList>
    </citation>
    <scope>NUCLEOTIDE SEQUENCE [LARGE SCALE GENOMIC DNA]</scope>
    <source>
        <strain>ATCC 55618 / DSM 22257 / CCUG 43843 / 130Z</strain>
    </source>
</reference>
<feature type="chain" id="PRO_1000071983" description="Trigger factor">
    <location>
        <begin position="1"/>
        <end position="431"/>
    </location>
</feature>
<feature type="domain" description="PPIase FKBP-type" evidence="1">
    <location>
        <begin position="160"/>
        <end position="245"/>
    </location>
</feature>
<evidence type="ECO:0000255" key="1">
    <source>
        <dbReference type="HAMAP-Rule" id="MF_00303"/>
    </source>
</evidence>
<dbReference type="EC" id="5.2.1.8" evidence="1"/>
<dbReference type="EMBL" id="CP000746">
    <property type="protein sequence ID" value="ABR74137.1"/>
    <property type="molecule type" value="Genomic_DNA"/>
</dbReference>
<dbReference type="RefSeq" id="WP_012072515.1">
    <property type="nucleotide sequence ID" value="NC_009655.1"/>
</dbReference>
<dbReference type="SMR" id="A6VME0"/>
<dbReference type="STRING" id="339671.Asuc_0765"/>
<dbReference type="KEGG" id="asu:Asuc_0765"/>
<dbReference type="eggNOG" id="COG0544">
    <property type="taxonomic scope" value="Bacteria"/>
</dbReference>
<dbReference type="HOGENOM" id="CLU_033058_2_0_6"/>
<dbReference type="OrthoDB" id="9767721at2"/>
<dbReference type="Proteomes" id="UP000001114">
    <property type="component" value="Chromosome"/>
</dbReference>
<dbReference type="GO" id="GO:0005737">
    <property type="term" value="C:cytoplasm"/>
    <property type="evidence" value="ECO:0007669"/>
    <property type="project" value="UniProtKB-SubCell"/>
</dbReference>
<dbReference type="GO" id="GO:0003755">
    <property type="term" value="F:peptidyl-prolyl cis-trans isomerase activity"/>
    <property type="evidence" value="ECO:0007669"/>
    <property type="project" value="UniProtKB-UniRule"/>
</dbReference>
<dbReference type="GO" id="GO:0044183">
    <property type="term" value="F:protein folding chaperone"/>
    <property type="evidence" value="ECO:0007669"/>
    <property type="project" value="TreeGrafter"/>
</dbReference>
<dbReference type="GO" id="GO:0043022">
    <property type="term" value="F:ribosome binding"/>
    <property type="evidence" value="ECO:0007669"/>
    <property type="project" value="TreeGrafter"/>
</dbReference>
<dbReference type="GO" id="GO:0051083">
    <property type="term" value="P:'de novo' cotranslational protein folding"/>
    <property type="evidence" value="ECO:0007669"/>
    <property type="project" value="TreeGrafter"/>
</dbReference>
<dbReference type="GO" id="GO:0051301">
    <property type="term" value="P:cell division"/>
    <property type="evidence" value="ECO:0007669"/>
    <property type="project" value="UniProtKB-KW"/>
</dbReference>
<dbReference type="GO" id="GO:0061077">
    <property type="term" value="P:chaperone-mediated protein folding"/>
    <property type="evidence" value="ECO:0007669"/>
    <property type="project" value="TreeGrafter"/>
</dbReference>
<dbReference type="GO" id="GO:0015031">
    <property type="term" value="P:protein transport"/>
    <property type="evidence" value="ECO:0007669"/>
    <property type="project" value="UniProtKB-UniRule"/>
</dbReference>
<dbReference type="GO" id="GO:0043335">
    <property type="term" value="P:protein unfolding"/>
    <property type="evidence" value="ECO:0007669"/>
    <property type="project" value="TreeGrafter"/>
</dbReference>
<dbReference type="FunFam" id="3.10.50.40:FF:000001">
    <property type="entry name" value="Trigger factor"/>
    <property type="match status" value="1"/>
</dbReference>
<dbReference type="Gene3D" id="3.10.50.40">
    <property type="match status" value="1"/>
</dbReference>
<dbReference type="Gene3D" id="3.30.70.1050">
    <property type="entry name" value="Trigger factor ribosome-binding domain"/>
    <property type="match status" value="1"/>
</dbReference>
<dbReference type="Gene3D" id="1.10.3120.10">
    <property type="entry name" value="Trigger factor, C-terminal domain"/>
    <property type="match status" value="1"/>
</dbReference>
<dbReference type="HAMAP" id="MF_00303">
    <property type="entry name" value="Trigger_factor_Tig"/>
    <property type="match status" value="1"/>
</dbReference>
<dbReference type="InterPro" id="IPR046357">
    <property type="entry name" value="PPIase_dom_sf"/>
</dbReference>
<dbReference type="InterPro" id="IPR001179">
    <property type="entry name" value="PPIase_FKBP_dom"/>
</dbReference>
<dbReference type="InterPro" id="IPR005215">
    <property type="entry name" value="Trig_fac"/>
</dbReference>
<dbReference type="InterPro" id="IPR008880">
    <property type="entry name" value="Trigger_fac_C"/>
</dbReference>
<dbReference type="InterPro" id="IPR037041">
    <property type="entry name" value="Trigger_fac_C_sf"/>
</dbReference>
<dbReference type="InterPro" id="IPR008881">
    <property type="entry name" value="Trigger_fac_ribosome-bd_bac"/>
</dbReference>
<dbReference type="InterPro" id="IPR036611">
    <property type="entry name" value="Trigger_fac_ribosome-bd_sf"/>
</dbReference>
<dbReference type="InterPro" id="IPR027304">
    <property type="entry name" value="Trigger_fact/SurA_dom_sf"/>
</dbReference>
<dbReference type="NCBIfam" id="TIGR00115">
    <property type="entry name" value="tig"/>
    <property type="match status" value="1"/>
</dbReference>
<dbReference type="PANTHER" id="PTHR30560">
    <property type="entry name" value="TRIGGER FACTOR CHAPERONE AND PEPTIDYL-PROLYL CIS/TRANS ISOMERASE"/>
    <property type="match status" value="1"/>
</dbReference>
<dbReference type="PANTHER" id="PTHR30560:SF3">
    <property type="entry name" value="TRIGGER FACTOR-LIKE PROTEIN TIG, CHLOROPLASTIC"/>
    <property type="match status" value="1"/>
</dbReference>
<dbReference type="Pfam" id="PF00254">
    <property type="entry name" value="FKBP_C"/>
    <property type="match status" value="1"/>
</dbReference>
<dbReference type="Pfam" id="PF05698">
    <property type="entry name" value="Trigger_C"/>
    <property type="match status" value="1"/>
</dbReference>
<dbReference type="Pfam" id="PF05697">
    <property type="entry name" value="Trigger_N"/>
    <property type="match status" value="1"/>
</dbReference>
<dbReference type="PIRSF" id="PIRSF003095">
    <property type="entry name" value="Trigger_factor"/>
    <property type="match status" value="1"/>
</dbReference>
<dbReference type="SUPFAM" id="SSF54534">
    <property type="entry name" value="FKBP-like"/>
    <property type="match status" value="1"/>
</dbReference>
<dbReference type="SUPFAM" id="SSF109998">
    <property type="entry name" value="Triger factor/SurA peptide-binding domain-like"/>
    <property type="match status" value="1"/>
</dbReference>
<dbReference type="SUPFAM" id="SSF102735">
    <property type="entry name" value="Trigger factor ribosome-binding domain"/>
    <property type="match status" value="1"/>
</dbReference>
<dbReference type="PROSITE" id="PS50059">
    <property type="entry name" value="FKBP_PPIASE"/>
    <property type="match status" value="1"/>
</dbReference>